<feature type="chain" id="PRO_0000289714" description="Mitogen-activated protein kinase mpkC">
    <location>
        <begin position="1"/>
        <end position="396"/>
    </location>
</feature>
<feature type="domain" description="Protein kinase" evidence="2">
    <location>
        <begin position="20"/>
        <end position="299"/>
    </location>
</feature>
<feature type="short sequence motif" description="TXY">
    <location>
        <begin position="171"/>
        <end position="173"/>
    </location>
</feature>
<feature type="active site" description="Proton acceptor" evidence="2 3">
    <location>
        <position position="141"/>
    </location>
</feature>
<feature type="binding site" evidence="2">
    <location>
        <begin position="26"/>
        <end position="34"/>
    </location>
    <ligand>
        <name>ATP</name>
        <dbReference type="ChEBI" id="CHEBI:30616"/>
    </ligand>
</feature>
<feature type="binding site" evidence="2">
    <location>
        <position position="49"/>
    </location>
    <ligand>
        <name>ATP</name>
        <dbReference type="ChEBI" id="CHEBI:30616"/>
    </ligand>
</feature>
<feature type="modified residue" description="Phosphothreonine" evidence="1">
    <location>
        <position position="171"/>
    </location>
</feature>
<feature type="modified residue" description="Phosphotyrosine" evidence="1">
    <location>
        <position position="173"/>
    </location>
</feature>
<proteinExistence type="inferred from homology"/>
<gene>
    <name type="primary">mpkC</name>
    <name type="ORF">An07g03980</name>
</gene>
<comment type="function">
    <text evidence="1">Mitogen-activated protein kinase required for growth on media where sorbitol or mannitol is the sole carbon source.</text>
</comment>
<comment type="catalytic activity">
    <reaction>
        <text>L-seryl-[protein] + ATP = O-phospho-L-seryl-[protein] + ADP + H(+)</text>
        <dbReference type="Rhea" id="RHEA:17989"/>
        <dbReference type="Rhea" id="RHEA-COMP:9863"/>
        <dbReference type="Rhea" id="RHEA-COMP:11604"/>
        <dbReference type="ChEBI" id="CHEBI:15378"/>
        <dbReference type="ChEBI" id="CHEBI:29999"/>
        <dbReference type="ChEBI" id="CHEBI:30616"/>
        <dbReference type="ChEBI" id="CHEBI:83421"/>
        <dbReference type="ChEBI" id="CHEBI:456216"/>
        <dbReference type="EC" id="2.7.11.24"/>
    </reaction>
</comment>
<comment type="catalytic activity">
    <reaction>
        <text>L-threonyl-[protein] + ATP = O-phospho-L-threonyl-[protein] + ADP + H(+)</text>
        <dbReference type="Rhea" id="RHEA:46608"/>
        <dbReference type="Rhea" id="RHEA-COMP:11060"/>
        <dbReference type="Rhea" id="RHEA-COMP:11605"/>
        <dbReference type="ChEBI" id="CHEBI:15378"/>
        <dbReference type="ChEBI" id="CHEBI:30013"/>
        <dbReference type="ChEBI" id="CHEBI:30616"/>
        <dbReference type="ChEBI" id="CHEBI:61977"/>
        <dbReference type="ChEBI" id="CHEBI:456216"/>
        <dbReference type="EC" id="2.7.11.24"/>
    </reaction>
</comment>
<comment type="cofactor">
    <cofactor evidence="1">
        <name>Mg(2+)</name>
        <dbReference type="ChEBI" id="CHEBI:18420"/>
    </cofactor>
</comment>
<comment type="activity regulation">
    <text evidence="1">Activated by tyrosine and threonine phosphorylation.</text>
</comment>
<comment type="domain">
    <text>The TXY motif contains the threonine and tyrosine residues whose phosphorylation activates the MAP kinases.</text>
</comment>
<comment type="PTM">
    <text evidence="1">Dually phosphorylated on Thr-171 and Tyr-173, which activates the enzyme.</text>
</comment>
<comment type="similarity">
    <text evidence="2">Belongs to the protein kinase superfamily. Ser/Thr protein kinase family. MAP kinase subfamily. HOG1 sub-subfamily.</text>
</comment>
<protein>
    <recommendedName>
        <fullName>Mitogen-activated protein kinase mpkC</fullName>
        <shortName>MAP kinase C</shortName>
        <ecNumber>2.7.11.24</ecNumber>
    </recommendedName>
</protein>
<keyword id="KW-0067">ATP-binding</keyword>
<keyword id="KW-0418">Kinase</keyword>
<keyword id="KW-0547">Nucleotide-binding</keyword>
<keyword id="KW-0597">Phosphoprotein</keyword>
<keyword id="KW-1185">Reference proteome</keyword>
<keyword id="KW-0723">Serine/threonine-protein kinase</keyword>
<keyword id="KW-0808">Transferase</keyword>
<reference key="1">
    <citation type="journal article" date="2007" name="Nat. Biotechnol.">
        <title>Genome sequencing and analysis of the versatile cell factory Aspergillus niger CBS 513.88.</title>
        <authorList>
            <person name="Pel H.J."/>
            <person name="de Winde J.H."/>
            <person name="Archer D.B."/>
            <person name="Dyer P.S."/>
            <person name="Hofmann G."/>
            <person name="Schaap P.J."/>
            <person name="Turner G."/>
            <person name="de Vries R.P."/>
            <person name="Albang R."/>
            <person name="Albermann K."/>
            <person name="Andersen M.R."/>
            <person name="Bendtsen J.D."/>
            <person name="Benen J.A.E."/>
            <person name="van den Berg M."/>
            <person name="Breestraat S."/>
            <person name="Caddick M.X."/>
            <person name="Contreras R."/>
            <person name="Cornell M."/>
            <person name="Coutinho P.M."/>
            <person name="Danchin E.G.J."/>
            <person name="Debets A.J.M."/>
            <person name="Dekker P."/>
            <person name="van Dijck P.W.M."/>
            <person name="van Dijk A."/>
            <person name="Dijkhuizen L."/>
            <person name="Driessen A.J.M."/>
            <person name="d'Enfert C."/>
            <person name="Geysens S."/>
            <person name="Goosen C."/>
            <person name="Groot G.S.P."/>
            <person name="de Groot P.W.J."/>
            <person name="Guillemette T."/>
            <person name="Henrissat B."/>
            <person name="Herweijer M."/>
            <person name="van den Hombergh J.P.T.W."/>
            <person name="van den Hondel C.A.M.J.J."/>
            <person name="van der Heijden R.T.J.M."/>
            <person name="van der Kaaij R.M."/>
            <person name="Klis F.M."/>
            <person name="Kools H.J."/>
            <person name="Kubicek C.P."/>
            <person name="van Kuyk P.A."/>
            <person name="Lauber J."/>
            <person name="Lu X."/>
            <person name="van der Maarel M.J.E.C."/>
            <person name="Meulenberg R."/>
            <person name="Menke H."/>
            <person name="Mortimer M.A."/>
            <person name="Nielsen J."/>
            <person name="Oliver S.G."/>
            <person name="Olsthoorn M."/>
            <person name="Pal K."/>
            <person name="van Peij N.N.M.E."/>
            <person name="Ram A.F.J."/>
            <person name="Rinas U."/>
            <person name="Roubos J.A."/>
            <person name="Sagt C.M.J."/>
            <person name="Schmoll M."/>
            <person name="Sun J."/>
            <person name="Ussery D."/>
            <person name="Varga J."/>
            <person name="Vervecken W."/>
            <person name="van de Vondervoort P.J.J."/>
            <person name="Wedler H."/>
            <person name="Woesten H.A.B."/>
            <person name="Zeng A.-P."/>
            <person name="van Ooyen A.J.J."/>
            <person name="Visser J."/>
            <person name="Stam H."/>
        </authorList>
    </citation>
    <scope>NUCLEOTIDE SEQUENCE [LARGE SCALE GENOMIC DNA]</scope>
    <source>
        <strain>ATCC MYA-4892 / CBS 513.88 / FGSC A1513</strain>
    </source>
</reference>
<accession>A2QN07</accession>
<dbReference type="EC" id="2.7.11.24"/>
<dbReference type="EMBL" id="AM270128">
    <property type="protein sequence ID" value="CAK48148.1"/>
    <property type="molecule type" value="Genomic_DNA"/>
</dbReference>
<dbReference type="RefSeq" id="XP_001391480.1">
    <property type="nucleotide sequence ID" value="XM_001391443.2"/>
</dbReference>
<dbReference type="SMR" id="A2QN07"/>
<dbReference type="EnsemblFungi" id="CAK48148">
    <property type="protein sequence ID" value="CAK48148"/>
    <property type="gene ID" value="An07g03980"/>
</dbReference>
<dbReference type="GeneID" id="4981664"/>
<dbReference type="KEGG" id="ang:An07g03980"/>
<dbReference type="VEuPathDB" id="FungiDB:An07g03980"/>
<dbReference type="HOGENOM" id="CLU_000288_181_1_1"/>
<dbReference type="Proteomes" id="UP000006706">
    <property type="component" value="Chromosome 4L"/>
</dbReference>
<dbReference type="GO" id="GO:0005524">
    <property type="term" value="F:ATP binding"/>
    <property type="evidence" value="ECO:0007669"/>
    <property type="project" value="UniProtKB-KW"/>
</dbReference>
<dbReference type="GO" id="GO:0004707">
    <property type="term" value="F:MAP kinase activity"/>
    <property type="evidence" value="ECO:0007669"/>
    <property type="project" value="UniProtKB-EC"/>
</dbReference>
<dbReference type="GO" id="GO:0106310">
    <property type="term" value="F:protein serine kinase activity"/>
    <property type="evidence" value="ECO:0007669"/>
    <property type="project" value="RHEA"/>
</dbReference>
<dbReference type="FunFam" id="1.10.510.10:FF:000049">
    <property type="entry name" value="Mitogen-activated protein kinase"/>
    <property type="match status" value="1"/>
</dbReference>
<dbReference type="FunFam" id="3.30.200.20:FF:000028">
    <property type="entry name" value="Mitogen-activated protein kinase"/>
    <property type="match status" value="1"/>
</dbReference>
<dbReference type="Gene3D" id="3.30.200.20">
    <property type="entry name" value="Phosphorylase Kinase, domain 1"/>
    <property type="match status" value="1"/>
</dbReference>
<dbReference type="Gene3D" id="1.10.510.10">
    <property type="entry name" value="Transferase(Phosphotransferase) domain 1"/>
    <property type="match status" value="1"/>
</dbReference>
<dbReference type="InterPro" id="IPR011009">
    <property type="entry name" value="Kinase-like_dom_sf"/>
</dbReference>
<dbReference type="InterPro" id="IPR050117">
    <property type="entry name" value="MAP_kinase"/>
</dbReference>
<dbReference type="InterPro" id="IPR003527">
    <property type="entry name" value="MAP_kinase_CS"/>
</dbReference>
<dbReference type="InterPro" id="IPR000719">
    <property type="entry name" value="Prot_kinase_dom"/>
</dbReference>
<dbReference type="InterPro" id="IPR017441">
    <property type="entry name" value="Protein_kinase_ATP_BS"/>
</dbReference>
<dbReference type="InterPro" id="IPR008271">
    <property type="entry name" value="Ser/Thr_kinase_AS"/>
</dbReference>
<dbReference type="PANTHER" id="PTHR24055">
    <property type="entry name" value="MITOGEN-ACTIVATED PROTEIN KINASE"/>
    <property type="match status" value="1"/>
</dbReference>
<dbReference type="Pfam" id="PF00069">
    <property type="entry name" value="Pkinase"/>
    <property type="match status" value="1"/>
</dbReference>
<dbReference type="SMART" id="SM00220">
    <property type="entry name" value="S_TKc"/>
    <property type="match status" value="1"/>
</dbReference>
<dbReference type="SUPFAM" id="SSF56112">
    <property type="entry name" value="Protein kinase-like (PK-like)"/>
    <property type="match status" value="1"/>
</dbReference>
<dbReference type="PROSITE" id="PS01351">
    <property type="entry name" value="MAPK"/>
    <property type="match status" value="1"/>
</dbReference>
<dbReference type="PROSITE" id="PS00107">
    <property type="entry name" value="PROTEIN_KINASE_ATP"/>
    <property type="match status" value="1"/>
</dbReference>
<dbReference type="PROSITE" id="PS50011">
    <property type="entry name" value="PROTEIN_KINASE_DOM"/>
    <property type="match status" value="1"/>
</dbReference>
<dbReference type="PROSITE" id="PS00108">
    <property type="entry name" value="PROTEIN_KINASE_ST"/>
    <property type="match status" value="1"/>
</dbReference>
<name>MPKC_ASPNC</name>
<evidence type="ECO:0000250" key="1"/>
<evidence type="ECO:0000255" key="2">
    <source>
        <dbReference type="PROSITE-ProRule" id="PRU00159"/>
    </source>
</evidence>
<evidence type="ECO:0000255" key="3">
    <source>
        <dbReference type="PROSITE-ProRule" id="PRU10027"/>
    </source>
</evidence>
<organism>
    <name type="scientific">Aspergillus niger (strain ATCC MYA-4892 / CBS 513.88 / FGSC A1513)</name>
    <dbReference type="NCBI Taxonomy" id="425011"/>
    <lineage>
        <taxon>Eukaryota</taxon>
        <taxon>Fungi</taxon>
        <taxon>Dikarya</taxon>
        <taxon>Ascomycota</taxon>
        <taxon>Pezizomycotina</taxon>
        <taxon>Eurotiomycetes</taxon>
        <taxon>Eurotiomycetidae</taxon>
        <taxon>Eurotiales</taxon>
        <taxon>Aspergillaceae</taxon>
        <taxon>Aspergillus</taxon>
        <taxon>Aspergillus subgen. Circumdati</taxon>
    </lineage>
</organism>
<sequence length="396" mass="45038">MAEFLRSQILGTTFETTNRYSDLQPVGLGAFGLVCSAYDMITRQPVAIKKMMKPFSNATLAKRTYREVKLLKHLRHENLIGLSDIFISPLEDVYLVTDLLGTDLNRLLTSKPLDGKFVQYFTYQLLRGLKYIHSAGVIHRDLKPSNILINENCDLKICDFGLARLQEPQMTGYVSTRYYRAPEIMLTWQKYGMQVDIWSAGCIVAEMLRGKPLFPGKDHINQFFLITDALGNPPDEVIERICTKTTLDLVKSLPKRQPAPWATLFPDSDENAIDLLGEMLIFDPDKRISAAKALEHPYLSVYHDPTDEPVAEQMFDWSFSEVAHSIDEWKIMIYTEVVDFHDIGPTEEPVITEPFLSPDPSLSPEVLDPLGQIQTQSMVTKSAETLDQDILQYLQI</sequence>